<name>RL20_RHOPB</name>
<accession>Q21C63</accession>
<comment type="function">
    <text evidence="1">Binds directly to 23S ribosomal RNA and is necessary for the in vitro assembly process of the 50S ribosomal subunit. It is not involved in the protein synthesizing functions of that subunit.</text>
</comment>
<comment type="similarity">
    <text evidence="1">Belongs to the bacterial ribosomal protein bL20 family.</text>
</comment>
<gene>
    <name evidence="1" type="primary">rplT</name>
    <name type="ordered locus">RPC_0448</name>
</gene>
<proteinExistence type="inferred from homology"/>
<reference key="1">
    <citation type="submission" date="2006-03" db="EMBL/GenBank/DDBJ databases">
        <title>Complete sequence of Rhodopseudomonas palustris BisB18.</title>
        <authorList>
            <consortium name="US DOE Joint Genome Institute"/>
            <person name="Copeland A."/>
            <person name="Lucas S."/>
            <person name="Lapidus A."/>
            <person name="Barry K."/>
            <person name="Detter J.C."/>
            <person name="Glavina del Rio T."/>
            <person name="Hammon N."/>
            <person name="Israni S."/>
            <person name="Dalin E."/>
            <person name="Tice H."/>
            <person name="Pitluck S."/>
            <person name="Chain P."/>
            <person name="Malfatti S."/>
            <person name="Shin M."/>
            <person name="Vergez L."/>
            <person name="Schmutz J."/>
            <person name="Larimer F."/>
            <person name="Land M."/>
            <person name="Hauser L."/>
            <person name="Pelletier D.A."/>
            <person name="Kyrpides N."/>
            <person name="Anderson I."/>
            <person name="Oda Y."/>
            <person name="Harwood C.S."/>
            <person name="Richardson P."/>
        </authorList>
    </citation>
    <scope>NUCLEOTIDE SEQUENCE [LARGE SCALE GENOMIC DNA]</scope>
    <source>
        <strain>BisB18</strain>
    </source>
</reference>
<sequence>MARVKRGVTAHAKHKKVYKLAKGFRGRRKNTIRTAKAAVDKAGQYAFRDRKRKKRTFRALWIQRINAAVRPLGMTYSVFINGLAKSGVMVDRKVLSDLAITEPAAFLAIAEKAKAALAA</sequence>
<protein>
    <recommendedName>
        <fullName evidence="1">Large ribosomal subunit protein bL20</fullName>
    </recommendedName>
    <alternativeName>
        <fullName evidence="2">50S ribosomal protein L20</fullName>
    </alternativeName>
</protein>
<dbReference type="EMBL" id="CP000301">
    <property type="protein sequence ID" value="ABD86023.1"/>
    <property type="molecule type" value="Genomic_DNA"/>
</dbReference>
<dbReference type="SMR" id="Q21C63"/>
<dbReference type="STRING" id="316056.RPC_0448"/>
<dbReference type="KEGG" id="rpc:RPC_0448"/>
<dbReference type="eggNOG" id="COG0292">
    <property type="taxonomic scope" value="Bacteria"/>
</dbReference>
<dbReference type="HOGENOM" id="CLU_123265_0_1_5"/>
<dbReference type="OrthoDB" id="9808966at2"/>
<dbReference type="GO" id="GO:1990904">
    <property type="term" value="C:ribonucleoprotein complex"/>
    <property type="evidence" value="ECO:0007669"/>
    <property type="project" value="UniProtKB-KW"/>
</dbReference>
<dbReference type="GO" id="GO:0005840">
    <property type="term" value="C:ribosome"/>
    <property type="evidence" value="ECO:0007669"/>
    <property type="project" value="UniProtKB-KW"/>
</dbReference>
<dbReference type="GO" id="GO:0019843">
    <property type="term" value="F:rRNA binding"/>
    <property type="evidence" value="ECO:0007669"/>
    <property type="project" value="UniProtKB-UniRule"/>
</dbReference>
<dbReference type="GO" id="GO:0003735">
    <property type="term" value="F:structural constituent of ribosome"/>
    <property type="evidence" value="ECO:0007669"/>
    <property type="project" value="InterPro"/>
</dbReference>
<dbReference type="GO" id="GO:0000027">
    <property type="term" value="P:ribosomal large subunit assembly"/>
    <property type="evidence" value="ECO:0007669"/>
    <property type="project" value="UniProtKB-UniRule"/>
</dbReference>
<dbReference type="GO" id="GO:0006412">
    <property type="term" value="P:translation"/>
    <property type="evidence" value="ECO:0007669"/>
    <property type="project" value="InterPro"/>
</dbReference>
<dbReference type="CDD" id="cd07026">
    <property type="entry name" value="Ribosomal_L20"/>
    <property type="match status" value="1"/>
</dbReference>
<dbReference type="FunFam" id="1.10.1900.20:FF:000001">
    <property type="entry name" value="50S ribosomal protein L20"/>
    <property type="match status" value="1"/>
</dbReference>
<dbReference type="Gene3D" id="6.10.160.10">
    <property type="match status" value="1"/>
</dbReference>
<dbReference type="Gene3D" id="1.10.1900.20">
    <property type="entry name" value="Ribosomal protein L20"/>
    <property type="match status" value="1"/>
</dbReference>
<dbReference type="HAMAP" id="MF_00382">
    <property type="entry name" value="Ribosomal_bL20"/>
    <property type="match status" value="1"/>
</dbReference>
<dbReference type="InterPro" id="IPR005813">
    <property type="entry name" value="Ribosomal_bL20"/>
</dbReference>
<dbReference type="InterPro" id="IPR049946">
    <property type="entry name" value="RIBOSOMAL_L20_CS"/>
</dbReference>
<dbReference type="InterPro" id="IPR035566">
    <property type="entry name" value="Ribosomal_protein_bL20_C"/>
</dbReference>
<dbReference type="NCBIfam" id="TIGR01032">
    <property type="entry name" value="rplT_bact"/>
    <property type="match status" value="1"/>
</dbReference>
<dbReference type="PANTHER" id="PTHR10986">
    <property type="entry name" value="39S RIBOSOMAL PROTEIN L20"/>
    <property type="match status" value="1"/>
</dbReference>
<dbReference type="Pfam" id="PF00453">
    <property type="entry name" value="Ribosomal_L20"/>
    <property type="match status" value="1"/>
</dbReference>
<dbReference type="PRINTS" id="PR00062">
    <property type="entry name" value="RIBOSOMALL20"/>
</dbReference>
<dbReference type="SUPFAM" id="SSF74731">
    <property type="entry name" value="Ribosomal protein L20"/>
    <property type="match status" value="1"/>
</dbReference>
<dbReference type="PROSITE" id="PS00937">
    <property type="entry name" value="RIBOSOMAL_L20"/>
    <property type="match status" value="1"/>
</dbReference>
<evidence type="ECO:0000255" key="1">
    <source>
        <dbReference type="HAMAP-Rule" id="MF_00382"/>
    </source>
</evidence>
<evidence type="ECO:0000305" key="2"/>
<organism>
    <name type="scientific">Rhodopseudomonas palustris (strain BisB18)</name>
    <dbReference type="NCBI Taxonomy" id="316056"/>
    <lineage>
        <taxon>Bacteria</taxon>
        <taxon>Pseudomonadati</taxon>
        <taxon>Pseudomonadota</taxon>
        <taxon>Alphaproteobacteria</taxon>
        <taxon>Hyphomicrobiales</taxon>
        <taxon>Nitrobacteraceae</taxon>
        <taxon>Rhodopseudomonas</taxon>
    </lineage>
</organism>
<keyword id="KW-0687">Ribonucleoprotein</keyword>
<keyword id="KW-0689">Ribosomal protein</keyword>
<keyword id="KW-0694">RNA-binding</keyword>
<keyword id="KW-0699">rRNA-binding</keyword>
<feature type="chain" id="PRO_0000243725" description="Large ribosomal subunit protein bL20">
    <location>
        <begin position="1"/>
        <end position="119"/>
    </location>
</feature>